<protein>
    <recommendedName>
        <fullName>DNA polymerase epsilon subunit B</fullName>
    </recommendedName>
    <alternativeName>
        <fullName>DNA polymerase II subunit 2</fullName>
    </alternativeName>
</protein>
<gene>
    <name type="primary">DPB2</name>
    <name type="ordered locus">AEL267C</name>
</gene>
<proteinExistence type="inferred from homology"/>
<sequence>MDRGSALPAEISPQLLRPLAYRVLSKKYGLHIKSDGLAQLAKFIGNAFGVDWRRSAETMQFLERFAAIWREQERGLFVDALGVDAVTQELRERNKTAKQRRPARARETTLDALVRPTEAYSAVESSGGDVTATEPMDEDTVREEPLDWTHYFKVIDTFSQQQFTYDVTKRRYRLVQQRESAAGPLSTLLRIPSLEANLAQFPTRYHLVRDRVLRNASFQNDDVYNPLSSMQQLQQQLDAGGAPLASTAYMSITQIKNLLGRDGKNFLLLGLIRKDSKGFWSLEDPSGSIEIDISETYPTKGTYYVPGCIVLAEGIYSSAGNRFRVSSITHPPGERREAFLEAIGNLDLLGIHGPSNESYISRLDKELKIRLHYLEKELTDHRFVFLGGNIFLDDTMTETALAKLFDVLEHDPPTVLVLPGSFTSTPIYPSSDSKSSSSTAAYRANFDALAKLLSKYERLINETTFVFIPGDNDPWGSMAYLGVAGTLPQHPIPGDFVTKVNRICKHVVWGSNPTRIAYLSQELVIMRDDMCNRFKRNSIIFPTVEEEQKQEYMLLQQELQDDERSSDLSISQLIKSRDQLPASVQESRKIVKTILDQQHLSPFTSQVRPITWDYDYTLHLSPIPSTMIICDPTAPKYDVTYNGCKSINPGSFLHKRSVNYTEYTPSLRKATEEEIVV</sequence>
<organism>
    <name type="scientific">Eremothecium gossypii (strain ATCC 10895 / CBS 109.51 / FGSC 9923 / NRRL Y-1056)</name>
    <name type="common">Yeast</name>
    <name type="synonym">Ashbya gossypii</name>
    <dbReference type="NCBI Taxonomy" id="284811"/>
    <lineage>
        <taxon>Eukaryota</taxon>
        <taxon>Fungi</taxon>
        <taxon>Dikarya</taxon>
        <taxon>Ascomycota</taxon>
        <taxon>Saccharomycotina</taxon>
        <taxon>Saccharomycetes</taxon>
        <taxon>Saccharomycetales</taxon>
        <taxon>Saccharomycetaceae</taxon>
        <taxon>Eremothecium</taxon>
    </lineage>
</organism>
<feature type="chain" id="PRO_0000071566" description="DNA polymerase epsilon subunit B">
    <location>
        <begin position="1"/>
        <end position="677"/>
    </location>
</feature>
<name>DPB2_EREGS</name>
<keyword id="KW-0235">DNA replication</keyword>
<keyword id="KW-0238">DNA-binding</keyword>
<keyword id="KW-0539">Nucleus</keyword>
<keyword id="KW-1185">Reference proteome</keyword>
<evidence type="ECO:0000250" key="1"/>
<evidence type="ECO:0000250" key="2">
    <source>
        <dbReference type="UniProtKB" id="P24482"/>
    </source>
</evidence>
<evidence type="ECO:0000305" key="3"/>
<comment type="function">
    <text evidence="2">As accessory component of the DNA polymerase epsilon (DNA polymerase II) participates in chromosomal DNA replication.</text>
</comment>
<comment type="subunit">
    <text evidence="1">Heterotetramer. Consists of four subunits: POL2, DPB2, DPB3 and DPB4 (By similarity).</text>
</comment>
<comment type="subcellular location">
    <subcellularLocation>
        <location evidence="1">Nucleus</location>
    </subcellularLocation>
</comment>
<comment type="miscellaneous">
    <text>In eukaryotes there are five DNA polymerases: alpha, beta, gamma, delta, and epsilon which are responsible for different reactions of DNA synthesis.</text>
</comment>
<comment type="similarity">
    <text evidence="3">Belongs to the DNA polymerase epsilon subunit B family.</text>
</comment>
<reference key="1">
    <citation type="journal article" date="2004" name="Science">
        <title>The Ashbya gossypii genome as a tool for mapping the ancient Saccharomyces cerevisiae genome.</title>
        <authorList>
            <person name="Dietrich F.S."/>
            <person name="Voegeli S."/>
            <person name="Brachat S."/>
            <person name="Lerch A."/>
            <person name="Gates K."/>
            <person name="Steiner S."/>
            <person name="Mohr C."/>
            <person name="Poehlmann R."/>
            <person name="Luedi P."/>
            <person name="Choi S."/>
            <person name="Wing R.A."/>
            <person name="Flavier A."/>
            <person name="Gaffney T.D."/>
            <person name="Philippsen P."/>
        </authorList>
    </citation>
    <scope>NUCLEOTIDE SEQUENCE [LARGE SCALE GENOMIC DNA]</scope>
    <source>
        <strain>ATCC 10895 / CBS 109.51 / FGSC 9923 / NRRL Y-1056</strain>
    </source>
</reference>
<reference key="2">
    <citation type="journal article" date="2013" name="G3 (Bethesda)">
        <title>Genomes of Ashbya fungi isolated from insects reveal four mating-type loci, numerous translocations, lack of transposons, and distinct gene duplications.</title>
        <authorList>
            <person name="Dietrich F.S."/>
            <person name="Voegeli S."/>
            <person name="Kuo S."/>
            <person name="Philippsen P."/>
        </authorList>
    </citation>
    <scope>GENOME REANNOTATION</scope>
    <source>
        <strain>ATCC 10895 / CBS 109.51 / FGSC 9923 / NRRL Y-1056</strain>
    </source>
</reference>
<accession>Q758V1</accession>
<dbReference type="EMBL" id="AE016818">
    <property type="protein sequence ID" value="AAS52417.1"/>
    <property type="molecule type" value="Genomic_DNA"/>
</dbReference>
<dbReference type="RefSeq" id="NP_984593.1">
    <property type="nucleotide sequence ID" value="NM_209946.1"/>
</dbReference>
<dbReference type="SMR" id="Q758V1"/>
<dbReference type="FunCoup" id="Q758V1">
    <property type="interactions" value="818"/>
</dbReference>
<dbReference type="STRING" id="284811.Q758V1"/>
<dbReference type="EnsemblFungi" id="AAS52417">
    <property type="protein sequence ID" value="AAS52417"/>
    <property type="gene ID" value="AGOS_AEL267C"/>
</dbReference>
<dbReference type="GeneID" id="4620773"/>
<dbReference type="KEGG" id="ago:AGOS_AEL267C"/>
<dbReference type="eggNOG" id="KOG3818">
    <property type="taxonomic scope" value="Eukaryota"/>
</dbReference>
<dbReference type="HOGENOM" id="CLU_010628_1_0_1"/>
<dbReference type="InParanoid" id="Q758V1"/>
<dbReference type="OMA" id="PEDGAWF"/>
<dbReference type="OrthoDB" id="10254730at2759"/>
<dbReference type="Proteomes" id="UP000000591">
    <property type="component" value="Chromosome V"/>
</dbReference>
<dbReference type="GO" id="GO:0005737">
    <property type="term" value="C:cytoplasm"/>
    <property type="evidence" value="ECO:0007669"/>
    <property type="project" value="EnsemblFungi"/>
</dbReference>
<dbReference type="GO" id="GO:0008622">
    <property type="term" value="C:epsilon DNA polymerase complex"/>
    <property type="evidence" value="ECO:0000318"/>
    <property type="project" value="GO_Central"/>
</dbReference>
<dbReference type="GO" id="GO:0043596">
    <property type="term" value="C:nuclear replication fork"/>
    <property type="evidence" value="ECO:0007669"/>
    <property type="project" value="EnsemblFungi"/>
</dbReference>
<dbReference type="GO" id="GO:0030337">
    <property type="term" value="F:DNA polymerase processivity factor activity"/>
    <property type="evidence" value="ECO:0007669"/>
    <property type="project" value="EnsemblFungi"/>
</dbReference>
<dbReference type="GO" id="GO:0003887">
    <property type="term" value="F:DNA-directed DNA polymerase activity"/>
    <property type="evidence" value="ECO:0007669"/>
    <property type="project" value="EnsemblFungi"/>
</dbReference>
<dbReference type="GO" id="GO:0003690">
    <property type="term" value="F:double-stranded DNA binding"/>
    <property type="evidence" value="ECO:0007669"/>
    <property type="project" value="EnsemblFungi"/>
</dbReference>
<dbReference type="GO" id="GO:0003697">
    <property type="term" value="F:single-stranded DNA binding"/>
    <property type="evidence" value="ECO:0007669"/>
    <property type="project" value="EnsemblFungi"/>
</dbReference>
<dbReference type="GO" id="GO:0006261">
    <property type="term" value="P:DNA-templated DNA replication"/>
    <property type="evidence" value="ECO:0000318"/>
    <property type="project" value="GO_Central"/>
</dbReference>
<dbReference type="GO" id="GO:0045005">
    <property type="term" value="P:DNA-templated DNA replication maintenance of fidelity"/>
    <property type="evidence" value="ECO:0007669"/>
    <property type="project" value="EnsemblFungi"/>
</dbReference>
<dbReference type="GO" id="GO:0042276">
    <property type="term" value="P:error-prone translesion synthesis"/>
    <property type="evidence" value="ECO:0000318"/>
    <property type="project" value="GO_Central"/>
</dbReference>
<dbReference type="InterPro" id="IPR007185">
    <property type="entry name" value="DNA_pol_a/d/e_bsu"/>
</dbReference>
<dbReference type="InterPro" id="IPR016266">
    <property type="entry name" value="POLE2"/>
</dbReference>
<dbReference type="PANTHER" id="PTHR12708:SF0">
    <property type="entry name" value="DNA POLYMERASE EPSILON SUBUNIT 2"/>
    <property type="match status" value="1"/>
</dbReference>
<dbReference type="PANTHER" id="PTHR12708">
    <property type="entry name" value="DNA POLYMERASE EPSILON SUBUNIT B"/>
    <property type="match status" value="1"/>
</dbReference>
<dbReference type="Pfam" id="PF04042">
    <property type="entry name" value="DNA_pol_E_B"/>
    <property type="match status" value="1"/>
</dbReference>